<organism>
    <name type="scientific">Burkholderia orbicola (strain AU 1054)</name>
    <dbReference type="NCBI Taxonomy" id="331271"/>
    <lineage>
        <taxon>Bacteria</taxon>
        <taxon>Pseudomonadati</taxon>
        <taxon>Pseudomonadota</taxon>
        <taxon>Betaproteobacteria</taxon>
        <taxon>Burkholderiales</taxon>
        <taxon>Burkholderiaceae</taxon>
        <taxon>Burkholderia</taxon>
        <taxon>Burkholderia cepacia complex</taxon>
        <taxon>Burkholderia orbicola</taxon>
    </lineage>
</organism>
<accession>Q1BYF5</accession>
<gene>
    <name evidence="1" type="primary">uppP1</name>
    <name type="ordered locus">Bcen_0438</name>
</gene>
<sequence>MDWILICKALILGVVEGLTEFLPVSSTGHLIVAGSFLNFNDSHAKTFDVVIQFGAILAVCWEYRQRIVSVVSGLPSRPDAQRFTLNVVIATIPAIALGLLFEKKIKAVLFSPVPVAFALVVGGAIILWAEARQRERSEPPRVMSVDALTPLDALKVGIAQCFALVPGMSRSGSTIIGGMLFGLDRRVATEFSFFLAIPIIFGATLYETVKDWQAFTVDSLGLFALGLVAAFVSAFVCVRWLLRYVATHDFTVFAWYRIAFGLFVLLVGYSGWLNWA</sequence>
<reference key="1">
    <citation type="submission" date="2006-05" db="EMBL/GenBank/DDBJ databases">
        <title>Complete sequence of chromosome 1 of Burkholderia cenocepacia AU 1054.</title>
        <authorList>
            <consortium name="US DOE Joint Genome Institute"/>
            <person name="Copeland A."/>
            <person name="Lucas S."/>
            <person name="Lapidus A."/>
            <person name="Barry K."/>
            <person name="Detter J.C."/>
            <person name="Glavina del Rio T."/>
            <person name="Hammon N."/>
            <person name="Israni S."/>
            <person name="Dalin E."/>
            <person name="Tice H."/>
            <person name="Pitluck S."/>
            <person name="Chain P."/>
            <person name="Malfatti S."/>
            <person name="Shin M."/>
            <person name="Vergez L."/>
            <person name="Schmutz J."/>
            <person name="Larimer F."/>
            <person name="Land M."/>
            <person name="Hauser L."/>
            <person name="Kyrpides N."/>
            <person name="Lykidis A."/>
            <person name="LiPuma J.J."/>
            <person name="Konstantinidis K."/>
            <person name="Tiedje J.M."/>
            <person name="Richardson P."/>
        </authorList>
    </citation>
    <scope>NUCLEOTIDE SEQUENCE [LARGE SCALE GENOMIC DNA]</scope>
    <source>
        <strain>AU 1054</strain>
    </source>
</reference>
<protein>
    <recommendedName>
        <fullName evidence="1">Undecaprenyl-diphosphatase 1</fullName>
        <ecNumber evidence="1">3.6.1.27</ecNumber>
    </recommendedName>
    <alternativeName>
        <fullName evidence="1">Bacitracin resistance protein 1</fullName>
    </alternativeName>
    <alternativeName>
        <fullName evidence="1">Undecaprenyl pyrophosphate phosphatase 1</fullName>
    </alternativeName>
</protein>
<keyword id="KW-0046">Antibiotic resistance</keyword>
<keyword id="KW-0997">Cell inner membrane</keyword>
<keyword id="KW-1003">Cell membrane</keyword>
<keyword id="KW-0133">Cell shape</keyword>
<keyword id="KW-0961">Cell wall biogenesis/degradation</keyword>
<keyword id="KW-0378">Hydrolase</keyword>
<keyword id="KW-0472">Membrane</keyword>
<keyword id="KW-0573">Peptidoglycan synthesis</keyword>
<keyword id="KW-0812">Transmembrane</keyword>
<keyword id="KW-1133">Transmembrane helix</keyword>
<proteinExistence type="inferred from homology"/>
<comment type="function">
    <text evidence="1">Catalyzes the dephosphorylation of undecaprenyl diphosphate (UPP). Confers resistance to bacitracin.</text>
</comment>
<comment type="catalytic activity">
    <reaction evidence="1">
        <text>di-trans,octa-cis-undecaprenyl diphosphate + H2O = di-trans,octa-cis-undecaprenyl phosphate + phosphate + H(+)</text>
        <dbReference type="Rhea" id="RHEA:28094"/>
        <dbReference type="ChEBI" id="CHEBI:15377"/>
        <dbReference type="ChEBI" id="CHEBI:15378"/>
        <dbReference type="ChEBI" id="CHEBI:43474"/>
        <dbReference type="ChEBI" id="CHEBI:58405"/>
        <dbReference type="ChEBI" id="CHEBI:60392"/>
        <dbReference type="EC" id="3.6.1.27"/>
    </reaction>
</comment>
<comment type="subcellular location">
    <subcellularLocation>
        <location evidence="1">Cell inner membrane</location>
        <topology evidence="1">Multi-pass membrane protein</topology>
    </subcellularLocation>
</comment>
<comment type="miscellaneous">
    <text>Bacitracin is thought to be involved in the inhibition of peptidoglycan synthesis by sequestering undecaprenyl diphosphate, thereby reducing the pool of lipid carrier available.</text>
</comment>
<comment type="similarity">
    <text evidence="1">Belongs to the UppP family.</text>
</comment>
<feature type="chain" id="PRO_0000250226" description="Undecaprenyl-diphosphatase 1">
    <location>
        <begin position="1"/>
        <end position="276"/>
    </location>
</feature>
<feature type="transmembrane region" description="Helical" evidence="1">
    <location>
        <begin position="83"/>
        <end position="103"/>
    </location>
</feature>
<feature type="transmembrane region" description="Helical" evidence="1">
    <location>
        <begin position="108"/>
        <end position="128"/>
    </location>
</feature>
<feature type="transmembrane region" description="Helical" evidence="1">
    <location>
        <begin position="187"/>
        <end position="207"/>
    </location>
</feature>
<feature type="transmembrane region" description="Helical" evidence="1">
    <location>
        <begin position="217"/>
        <end position="237"/>
    </location>
</feature>
<feature type="transmembrane region" description="Helical" evidence="1">
    <location>
        <begin position="252"/>
        <end position="272"/>
    </location>
</feature>
<evidence type="ECO:0000255" key="1">
    <source>
        <dbReference type="HAMAP-Rule" id="MF_01006"/>
    </source>
</evidence>
<dbReference type="EC" id="3.6.1.27" evidence="1"/>
<dbReference type="EMBL" id="CP000378">
    <property type="protein sequence ID" value="ABF75350.1"/>
    <property type="molecule type" value="Genomic_DNA"/>
</dbReference>
<dbReference type="SMR" id="Q1BYF5"/>
<dbReference type="HOGENOM" id="CLU_060296_2_0_4"/>
<dbReference type="GO" id="GO:0005886">
    <property type="term" value="C:plasma membrane"/>
    <property type="evidence" value="ECO:0007669"/>
    <property type="project" value="UniProtKB-SubCell"/>
</dbReference>
<dbReference type="GO" id="GO:0050380">
    <property type="term" value="F:undecaprenyl-diphosphatase activity"/>
    <property type="evidence" value="ECO:0007669"/>
    <property type="project" value="UniProtKB-UniRule"/>
</dbReference>
<dbReference type="GO" id="GO:0071555">
    <property type="term" value="P:cell wall organization"/>
    <property type="evidence" value="ECO:0007669"/>
    <property type="project" value="UniProtKB-KW"/>
</dbReference>
<dbReference type="GO" id="GO:0009252">
    <property type="term" value="P:peptidoglycan biosynthetic process"/>
    <property type="evidence" value="ECO:0007669"/>
    <property type="project" value="UniProtKB-KW"/>
</dbReference>
<dbReference type="GO" id="GO:0008360">
    <property type="term" value="P:regulation of cell shape"/>
    <property type="evidence" value="ECO:0007669"/>
    <property type="project" value="UniProtKB-KW"/>
</dbReference>
<dbReference type="GO" id="GO:0046677">
    <property type="term" value="P:response to antibiotic"/>
    <property type="evidence" value="ECO:0007669"/>
    <property type="project" value="UniProtKB-UniRule"/>
</dbReference>
<dbReference type="HAMAP" id="MF_01006">
    <property type="entry name" value="Undec_diphosphatase"/>
    <property type="match status" value="1"/>
</dbReference>
<dbReference type="InterPro" id="IPR003824">
    <property type="entry name" value="UppP"/>
</dbReference>
<dbReference type="NCBIfam" id="NF001389">
    <property type="entry name" value="PRK00281.1-2"/>
    <property type="match status" value="1"/>
</dbReference>
<dbReference type="NCBIfam" id="NF001390">
    <property type="entry name" value="PRK00281.1-4"/>
    <property type="match status" value="1"/>
</dbReference>
<dbReference type="NCBIfam" id="TIGR00753">
    <property type="entry name" value="undec_PP_bacA"/>
    <property type="match status" value="1"/>
</dbReference>
<dbReference type="PANTHER" id="PTHR30622">
    <property type="entry name" value="UNDECAPRENYL-DIPHOSPHATASE"/>
    <property type="match status" value="1"/>
</dbReference>
<dbReference type="PANTHER" id="PTHR30622:SF3">
    <property type="entry name" value="UNDECAPRENYL-DIPHOSPHATASE"/>
    <property type="match status" value="1"/>
</dbReference>
<dbReference type="Pfam" id="PF02673">
    <property type="entry name" value="BacA"/>
    <property type="match status" value="1"/>
</dbReference>
<name>UPPP1_BURO1</name>